<name>EIF3B_TOBAC</name>
<proteinExistence type="evidence at transcript level"/>
<reference key="1">
    <citation type="journal article" date="1999" name="Plant Sci.">
        <title>Characterization of Prt1, a gene encoding for one of the subunits of the translation initiation factor 3 (eIF3), from Nicotiana tabacum.</title>
        <authorList>
            <person name="Shen W.H."/>
            <person name="Gigot C."/>
        </authorList>
    </citation>
    <scope>NUCLEOTIDE SEQUENCE [MRNA]</scope>
    <source>
        <strain>cv. Bright Yellow 2</strain>
    </source>
</reference>
<keyword id="KW-0963">Cytoplasm</keyword>
<keyword id="KW-0396">Initiation factor</keyword>
<keyword id="KW-0648">Protein biosynthesis</keyword>
<keyword id="KW-1185">Reference proteome</keyword>
<keyword id="KW-0677">Repeat</keyword>
<keyword id="KW-0694">RNA-binding</keyword>
<keyword id="KW-0853">WD repeat</keyword>
<feature type="chain" id="PRO_0000123533" description="Eukaryotic translation initiation factor 3 subunit B">
    <location>
        <begin position="1"/>
        <end position="719"/>
    </location>
</feature>
<feature type="domain" description="RRM" evidence="1">
    <location>
        <begin position="60"/>
        <end position="147"/>
    </location>
</feature>
<feature type="repeat" description="WD 1">
    <location>
        <begin position="167"/>
        <end position="207"/>
    </location>
</feature>
<feature type="repeat" description="WD 2">
    <location>
        <begin position="511"/>
        <end position="553"/>
    </location>
</feature>
<feature type="repeat" description="WD 3">
    <location>
        <begin position="555"/>
        <end position="598"/>
    </location>
</feature>
<feature type="region of interest" description="Disordered" evidence="2">
    <location>
        <begin position="675"/>
        <end position="698"/>
    </location>
</feature>
<feature type="compositionally biased region" description="Basic and acidic residues" evidence="2">
    <location>
        <begin position="675"/>
        <end position="686"/>
    </location>
</feature>
<feature type="compositionally biased region" description="Acidic residues" evidence="2">
    <location>
        <begin position="687"/>
        <end position="698"/>
    </location>
</feature>
<comment type="function">
    <text evidence="1">RNA-binding component of the eukaryotic translation initiation factor 3 (eIF-3) complex, which is involved in protein synthesis of a specialized repertoire of mRNAs and, together with other initiation factors, stimulates binding of mRNA and methionyl-tRNAi to the 40S ribosome. The eIF-3 complex specifically targets and initiates translation of a subset of mRNAs involved in cell proliferation.</text>
</comment>
<comment type="subunit">
    <text evidence="1">Component of the eukaryotic translation initiation factor 3 (eIF-3) complex.</text>
</comment>
<comment type="subcellular location">
    <subcellularLocation>
        <location evidence="1">Cytoplasm</location>
    </subcellularLocation>
</comment>
<comment type="similarity">
    <text evidence="1">Belongs to the eIF-3 subunit B family.</text>
</comment>
<sequence length="719" mass="82524">MADVTSMGEITAIAARIGVDLSQIDLDSIHLPPGEDCGIPSDDDDLMEEDPLEFDAGFGNILVVDNLPVVPKEKFEKLEGVVRKIYSQLGVIKEDGLWMPVDPETHKTLGYCFIEYNTPQEAELSKEKTHGYKLDRSHIFAVNMFDDIERFLKVPDEWAPPEIKPYVPGENLQQWLTDEKARDQFVIRAGNDTEVLWNDARQLKPELVYKRSFWTESFVQWSPLGTYLATVHRQGGAIWGGATTSNRLMRYAHPQVKLIDFSLAERYLVTYSSHEPSNPRDSHAVVLNISDVRTGKVMRDFQGSADEFAVGGTGGVTGVSWPVFRWSGGKQDKYFARIGKNVISVYETETFSLIDKKSIKVENVMDFSWSPADPILALFVPECGNQPARVSLVQIPSKEELRQKNLFSVSDCKMYWQSNGDYLAVKVDRYTKTKKSTYTGFELFRIKERDIPIEVLELDNTNDKIPAFGWGPEGSPICCYPSVTTPRPDIRFYSVPVWALTPGLVSKLTTLKGKQANALYWSPGGRFLILTGLKGFNGQLEFFDVDELETMASAEHFMATDVEWDPTGRYVATSVTSVHEMENGFNIWSFNGKLLYRILKDHFFQYLWRPRPPSFLSKEKEEEIAKNLKRYSKKYEAEDQDVSLQLSEQDREKRKKLKEEWEAWINEWKRLHEEEKMERQKLRDGEASDEEEEYEAKEVEVEEIINVTEEIIPFEESQQ</sequence>
<gene>
    <name type="primary">TIF3B1</name>
    <name type="synonym">PRT1</name>
</gene>
<organism>
    <name type="scientific">Nicotiana tabacum</name>
    <name type="common">Common tobacco</name>
    <dbReference type="NCBI Taxonomy" id="4097"/>
    <lineage>
        <taxon>Eukaryota</taxon>
        <taxon>Viridiplantae</taxon>
        <taxon>Streptophyta</taxon>
        <taxon>Embryophyta</taxon>
        <taxon>Tracheophyta</taxon>
        <taxon>Spermatophyta</taxon>
        <taxon>Magnoliopsida</taxon>
        <taxon>eudicotyledons</taxon>
        <taxon>Gunneridae</taxon>
        <taxon>Pentapetalae</taxon>
        <taxon>asterids</taxon>
        <taxon>lamiids</taxon>
        <taxon>Solanales</taxon>
        <taxon>Solanaceae</taxon>
        <taxon>Nicotianoideae</taxon>
        <taxon>Nicotianeae</taxon>
        <taxon>Nicotiana</taxon>
    </lineage>
</organism>
<protein>
    <recommendedName>
        <fullName evidence="1">Eukaryotic translation initiation factor 3 subunit B</fullName>
        <shortName evidence="1">eIF3b</shortName>
    </recommendedName>
    <alternativeName>
        <fullName evidence="1">eIF-3-eta</fullName>
    </alternativeName>
    <alternativeName>
        <fullName evidence="1">eIF3 p110</fullName>
    </alternativeName>
</protein>
<accession>P56821</accession>
<dbReference type="EMBL" id="Y11996">
    <property type="protein sequence ID" value="CAA72721.1"/>
    <property type="molecule type" value="mRNA"/>
</dbReference>
<dbReference type="SMR" id="P56821"/>
<dbReference type="STRING" id="4097.P56821"/>
<dbReference type="iPTMnet" id="P56821"/>
<dbReference type="PaxDb" id="4097-P56821"/>
<dbReference type="Proteomes" id="UP000084051">
    <property type="component" value="Unplaced"/>
</dbReference>
<dbReference type="GO" id="GO:0016282">
    <property type="term" value="C:eukaryotic 43S preinitiation complex"/>
    <property type="evidence" value="ECO:0007669"/>
    <property type="project" value="UniProtKB-UniRule"/>
</dbReference>
<dbReference type="GO" id="GO:0033290">
    <property type="term" value="C:eukaryotic 48S preinitiation complex"/>
    <property type="evidence" value="ECO:0007669"/>
    <property type="project" value="UniProtKB-UniRule"/>
</dbReference>
<dbReference type="GO" id="GO:0005852">
    <property type="term" value="C:eukaryotic translation initiation factor 3 complex"/>
    <property type="evidence" value="ECO:0000318"/>
    <property type="project" value="GO_Central"/>
</dbReference>
<dbReference type="GO" id="GO:0003723">
    <property type="term" value="F:RNA binding"/>
    <property type="evidence" value="ECO:0007669"/>
    <property type="project" value="UniProtKB-UniRule"/>
</dbReference>
<dbReference type="GO" id="GO:0003743">
    <property type="term" value="F:translation initiation factor activity"/>
    <property type="evidence" value="ECO:0007669"/>
    <property type="project" value="UniProtKB-UniRule"/>
</dbReference>
<dbReference type="GO" id="GO:0031369">
    <property type="term" value="F:translation initiation factor binding"/>
    <property type="evidence" value="ECO:0007669"/>
    <property type="project" value="InterPro"/>
</dbReference>
<dbReference type="GO" id="GO:0001732">
    <property type="term" value="P:formation of cytoplasmic translation initiation complex"/>
    <property type="evidence" value="ECO:0007669"/>
    <property type="project" value="UniProtKB-UniRule"/>
</dbReference>
<dbReference type="GO" id="GO:0006413">
    <property type="term" value="P:translational initiation"/>
    <property type="evidence" value="ECO:0000318"/>
    <property type="project" value="GO_Central"/>
</dbReference>
<dbReference type="CDD" id="cd12278">
    <property type="entry name" value="RRM_eIF3B"/>
    <property type="match status" value="1"/>
</dbReference>
<dbReference type="FunFam" id="2.130.10.10:FF:000260">
    <property type="entry name" value="Eukaryotic translation initiation factor 3 subunit B"/>
    <property type="match status" value="1"/>
</dbReference>
<dbReference type="FunFam" id="2.130.10.10:FF:000286">
    <property type="entry name" value="Eukaryotic translation initiation factor 3 subunit B"/>
    <property type="match status" value="1"/>
</dbReference>
<dbReference type="FunFam" id="3.30.70.330:FF:000235">
    <property type="entry name" value="Eukaryotic translation initiation factor 3 subunit B"/>
    <property type="match status" value="1"/>
</dbReference>
<dbReference type="Gene3D" id="3.30.70.330">
    <property type="match status" value="1"/>
</dbReference>
<dbReference type="Gene3D" id="2.130.10.10">
    <property type="entry name" value="YVTN repeat-like/Quinoprotein amine dehydrogenase"/>
    <property type="match status" value="1"/>
</dbReference>
<dbReference type="HAMAP" id="MF_03001">
    <property type="entry name" value="eIF3b"/>
    <property type="match status" value="1"/>
</dbReference>
<dbReference type="InterPro" id="IPR011400">
    <property type="entry name" value="EIF3B"/>
</dbReference>
<dbReference type="InterPro" id="IPR034363">
    <property type="entry name" value="eIF3B_RRM"/>
</dbReference>
<dbReference type="InterPro" id="IPR012677">
    <property type="entry name" value="Nucleotide-bd_a/b_plait_sf"/>
</dbReference>
<dbReference type="InterPro" id="IPR035979">
    <property type="entry name" value="RBD_domain_sf"/>
</dbReference>
<dbReference type="InterPro" id="IPR000504">
    <property type="entry name" value="RRM_dom"/>
</dbReference>
<dbReference type="InterPro" id="IPR013979">
    <property type="entry name" value="TIF_beta_prop-like"/>
</dbReference>
<dbReference type="InterPro" id="IPR015943">
    <property type="entry name" value="WD40/YVTN_repeat-like_dom_sf"/>
</dbReference>
<dbReference type="PANTHER" id="PTHR14068">
    <property type="entry name" value="EUKARYOTIC TRANSLATION INITIATION FACTOR 3 EIF3 -RELATED"/>
    <property type="match status" value="1"/>
</dbReference>
<dbReference type="PANTHER" id="PTHR14068:SF0">
    <property type="entry name" value="EUKARYOTIC TRANSLATION INITIATION FACTOR 3 SUBUNIT B"/>
    <property type="match status" value="1"/>
</dbReference>
<dbReference type="Pfam" id="PF08662">
    <property type="entry name" value="eIF2A"/>
    <property type="match status" value="1"/>
</dbReference>
<dbReference type="Pfam" id="PF00076">
    <property type="entry name" value="RRM_1"/>
    <property type="match status" value="1"/>
</dbReference>
<dbReference type="PIRSF" id="PIRSF036424">
    <property type="entry name" value="eIF3b"/>
    <property type="match status" value="1"/>
</dbReference>
<dbReference type="SUPFAM" id="SSF54928">
    <property type="entry name" value="RNA-binding domain, RBD"/>
    <property type="match status" value="1"/>
</dbReference>
<dbReference type="SUPFAM" id="SSF69322">
    <property type="entry name" value="Tricorn protease domain 2"/>
    <property type="match status" value="1"/>
</dbReference>
<dbReference type="PROSITE" id="PS50102">
    <property type="entry name" value="RRM"/>
    <property type="match status" value="1"/>
</dbReference>
<evidence type="ECO:0000255" key="1">
    <source>
        <dbReference type="HAMAP-Rule" id="MF_03001"/>
    </source>
</evidence>
<evidence type="ECO:0000256" key="2">
    <source>
        <dbReference type="SAM" id="MobiDB-lite"/>
    </source>
</evidence>